<protein>
    <recommendedName>
        <fullName evidence="1">Histidinol-phosphate aminotransferase</fullName>
        <ecNumber evidence="1">2.6.1.9</ecNumber>
    </recommendedName>
    <alternativeName>
        <fullName evidence="1">Imidazole acetol-phosphate transaminase</fullName>
    </alternativeName>
</protein>
<reference key="1">
    <citation type="journal article" date="1997" name="Microbiology">
        <title>The Paracoccus denitrificans ccmA, B and C genes: cloning and sequencing, and analysis of the potential of their products to form a haem or apo-c-type cytochrome transporter.</title>
        <authorList>
            <person name="Page D."/>
            <person name="Pearce D.A."/>
            <person name="Norris H.A."/>
            <person name="Ferguson S.J."/>
        </authorList>
    </citation>
    <scope>NUCLEOTIDE SEQUENCE [GENOMIC DNA]</scope>
</reference>
<reference key="2">
    <citation type="submission" date="2006-12" db="EMBL/GenBank/DDBJ databases">
        <title>Complete sequence of chromosome 1 of Paracoccus denitrificans PD1222.</title>
        <authorList>
            <person name="Copeland A."/>
            <person name="Lucas S."/>
            <person name="Lapidus A."/>
            <person name="Barry K."/>
            <person name="Detter J.C."/>
            <person name="Glavina del Rio T."/>
            <person name="Hammon N."/>
            <person name="Israni S."/>
            <person name="Dalin E."/>
            <person name="Tice H."/>
            <person name="Pitluck S."/>
            <person name="Munk A.C."/>
            <person name="Brettin T."/>
            <person name="Bruce D."/>
            <person name="Han C."/>
            <person name="Tapia R."/>
            <person name="Gilna P."/>
            <person name="Schmutz J."/>
            <person name="Larimer F."/>
            <person name="Land M."/>
            <person name="Hauser L."/>
            <person name="Kyrpides N."/>
            <person name="Lykidis A."/>
            <person name="Spiro S."/>
            <person name="Richardson D.J."/>
            <person name="Moir J.W.B."/>
            <person name="Ferguson S.J."/>
            <person name="van Spanning R.J.M."/>
            <person name="Richardson P."/>
        </authorList>
    </citation>
    <scope>NUCLEOTIDE SEQUENCE [LARGE SCALE GENOMIC DNA]</scope>
    <source>
        <strain>Pd 1222</strain>
    </source>
</reference>
<sequence length="367" mass="39582">MSQNQTTIAPQPGIMEISLYEGGASKVAGVENVVKLSSNENPFGPSDKAREAMIRAAHGLHRYPNTDHAGLRGAIGEVHGLDPDRIICGVGSDEIIHFLCQAYAGPGTEVLFTEHGFLMYRISAHAAGAIPVQVAERDRVTDIDALIAGATPRTRLIFVANPNNPTGTMVGLPELERLARAVPQAILVVDAAYAEYVGDYDGGAELATRLPNVFMTRTFSKIYGLGGLRVGWGYGPREIVDVLNRIRGPFNLSNVALEGAEAAMRDREHIARCQAENARMRAWLAEALAEKGVPSDTSCANFILARFADAETAGACDEYLKTQGLIVRRVAGYGLPHCLRITIGDEASCRRVAHVIGQYMAERAESR</sequence>
<name>HIS8_PARDP</name>
<feature type="chain" id="PRO_0000153409" description="Histidinol-phosphate aminotransferase">
    <location>
        <begin position="1"/>
        <end position="367"/>
    </location>
</feature>
<feature type="modified residue" description="N6-(pyridoxal phosphate)lysine" evidence="1">
    <location>
        <position position="221"/>
    </location>
</feature>
<feature type="sequence conflict" description="In Ref. 1; CAA96498." evidence="2" ref="1">
    <original>A</original>
    <variation>R</variation>
    <location>
        <position position="9"/>
    </location>
</feature>
<feature type="sequence conflict" description="In Ref. 1; CAA96498." evidence="2" ref="1">
    <location>
        <position position="153"/>
    </location>
</feature>
<feature type="sequence conflict" description="In Ref. 1; CAA96498." evidence="2" ref="1">
    <original>N</original>
    <variation>K</variation>
    <location>
        <position position="163"/>
    </location>
</feature>
<feature type="sequence conflict" description="In Ref. 1; CAA96498." evidence="2" ref="1">
    <original>AI</original>
    <variation>RIA</variation>
    <location>
        <begin position="185"/>
        <end position="186"/>
    </location>
</feature>
<feature type="sequence conflict" description="In Ref. 1; CAA96498." evidence="2" ref="1">
    <original>E</original>
    <variation>Q</variation>
    <location>
        <position position="205"/>
    </location>
</feature>
<feature type="sequence conflict" description="In Ref. 1; CAA96498." evidence="2" ref="1">
    <original>TR</original>
    <variation>QA</variation>
    <location>
        <begin position="208"/>
        <end position="209"/>
    </location>
</feature>
<feature type="sequence conflict" description="In Ref. 1; CAA96498." evidence="2" ref="1">
    <original>G</original>
    <variation>A</variation>
    <location>
        <position position="248"/>
    </location>
</feature>
<feature type="sequence conflict" description="In Ref. 1; CAA96498." evidence="2" ref="1">
    <original>GQYMAER</original>
    <variation>ASTWPSA</variation>
    <location>
        <begin position="357"/>
        <end position="363"/>
    </location>
</feature>
<accession>Q51687</accession>
<accession>A1B1W6</accession>
<organism>
    <name type="scientific">Paracoccus denitrificans (strain Pd 1222)</name>
    <dbReference type="NCBI Taxonomy" id="318586"/>
    <lineage>
        <taxon>Bacteria</taxon>
        <taxon>Pseudomonadati</taxon>
        <taxon>Pseudomonadota</taxon>
        <taxon>Alphaproteobacteria</taxon>
        <taxon>Rhodobacterales</taxon>
        <taxon>Paracoccaceae</taxon>
        <taxon>Paracoccus</taxon>
    </lineage>
</organism>
<comment type="catalytic activity">
    <reaction evidence="1">
        <text>L-histidinol phosphate + 2-oxoglutarate = 3-(imidazol-4-yl)-2-oxopropyl phosphate + L-glutamate</text>
        <dbReference type="Rhea" id="RHEA:23744"/>
        <dbReference type="ChEBI" id="CHEBI:16810"/>
        <dbReference type="ChEBI" id="CHEBI:29985"/>
        <dbReference type="ChEBI" id="CHEBI:57766"/>
        <dbReference type="ChEBI" id="CHEBI:57980"/>
        <dbReference type="EC" id="2.6.1.9"/>
    </reaction>
</comment>
<comment type="cofactor">
    <cofactor evidence="1">
        <name>pyridoxal 5'-phosphate</name>
        <dbReference type="ChEBI" id="CHEBI:597326"/>
    </cofactor>
</comment>
<comment type="pathway">
    <text evidence="1">Amino-acid biosynthesis; L-histidine biosynthesis; L-histidine from 5-phospho-alpha-D-ribose 1-diphosphate: step 7/9.</text>
</comment>
<comment type="subunit">
    <text evidence="1">Homodimer.</text>
</comment>
<comment type="similarity">
    <text evidence="1">Belongs to the class-II pyridoxal-phosphate-dependent aminotransferase family. Histidinol-phosphate aminotransferase subfamily.</text>
</comment>
<keyword id="KW-0028">Amino-acid biosynthesis</keyword>
<keyword id="KW-0032">Aminotransferase</keyword>
<keyword id="KW-0368">Histidine biosynthesis</keyword>
<keyword id="KW-0663">Pyridoxal phosphate</keyword>
<keyword id="KW-1185">Reference proteome</keyword>
<keyword id="KW-0808">Transferase</keyword>
<gene>
    <name evidence="1" type="primary">hisC</name>
    <name type="synonym">hisH</name>
    <name type="ordered locus">Pden_1409</name>
</gene>
<dbReference type="EC" id="2.6.1.9" evidence="1"/>
<dbReference type="EMBL" id="Z71971">
    <property type="protein sequence ID" value="CAA96498.1"/>
    <property type="molecule type" value="Genomic_DNA"/>
</dbReference>
<dbReference type="EMBL" id="CP000489">
    <property type="protein sequence ID" value="ABL69510.1"/>
    <property type="molecule type" value="Genomic_DNA"/>
</dbReference>
<dbReference type="RefSeq" id="WP_011747728.1">
    <property type="nucleotide sequence ID" value="NC_008686.1"/>
</dbReference>
<dbReference type="SMR" id="Q51687"/>
<dbReference type="STRING" id="318586.Pden_1409"/>
<dbReference type="EnsemblBacteria" id="ABL69510">
    <property type="protein sequence ID" value="ABL69510"/>
    <property type="gene ID" value="Pden_1409"/>
</dbReference>
<dbReference type="KEGG" id="pde:Pden_1409"/>
<dbReference type="eggNOG" id="COG0079">
    <property type="taxonomic scope" value="Bacteria"/>
</dbReference>
<dbReference type="HOGENOM" id="CLU_017584_3_3_5"/>
<dbReference type="OrthoDB" id="9809616at2"/>
<dbReference type="UniPathway" id="UPA00031">
    <property type="reaction ID" value="UER00012"/>
</dbReference>
<dbReference type="Proteomes" id="UP000000361">
    <property type="component" value="Chromosome 1"/>
</dbReference>
<dbReference type="GO" id="GO:0004400">
    <property type="term" value="F:histidinol-phosphate transaminase activity"/>
    <property type="evidence" value="ECO:0007669"/>
    <property type="project" value="UniProtKB-UniRule"/>
</dbReference>
<dbReference type="GO" id="GO:0030170">
    <property type="term" value="F:pyridoxal phosphate binding"/>
    <property type="evidence" value="ECO:0007669"/>
    <property type="project" value="InterPro"/>
</dbReference>
<dbReference type="GO" id="GO:0000105">
    <property type="term" value="P:L-histidine biosynthetic process"/>
    <property type="evidence" value="ECO:0007669"/>
    <property type="project" value="UniProtKB-UniRule"/>
</dbReference>
<dbReference type="CDD" id="cd00609">
    <property type="entry name" value="AAT_like"/>
    <property type="match status" value="1"/>
</dbReference>
<dbReference type="Gene3D" id="3.90.1150.10">
    <property type="entry name" value="Aspartate Aminotransferase, domain 1"/>
    <property type="match status" value="1"/>
</dbReference>
<dbReference type="Gene3D" id="3.40.640.10">
    <property type="entry name" value="Type I PLP-dependent aspartate aminotransferase-like (Major domain)"/>
    <property type="match status" value="1"/>
</dbReference>
<dbReference type="HAMAP" id="MF_01023">
    <property type="entry name" value="HisC_aminotrans_2"/>
    <property type="match status" value="1"/>
</dbReference>
<dbReference type="InterPro" id="IPR004839">
    <property type="entry name" value="Aminotransferase_I/II_large"/>
</dbReference>
<dbReference type="InterPro" id="IPR005861">
    <property type="entry name" value="HisP_aminotrans"/>
</dbReference>
<dbReference type="InterPro" id="IPR050106">
    <property type="entry name" value="HistidinolP_aminotransfase"/>
</dbReference>
<dbReference type="InterPro" id="IPR015424">
    <property type="entry name" value="PyrdxlP-dep_Trfase"/>
</dbReference>
<dbReference type="InterPro" id="IPR015421">
    <property type="entry name" value="PyrdxlP-dep_Trfase_major"/>
</dbReference>
<dbReference type="InterPro" id="IPR015422">
    <property type="entry name" value="PyrdxlP-dep_Trfase_small"/>
</dbReference>
<dbReference type="NCBIfam" id="TIGR01141">
    <property type="entry name" value="hisC"/>
    <property type="match status" value="1"/>
</dbReference>
<dbReference type="PANTHER" id="PTHR43643:SF3">
    <property type="entry name" value="HISTIDINOL-PHOSPHATE AMINOTRANSFERASE"/>
    <property type="match status" value="1"/>
</dbReference>
<dbReference type="PANTHER" id="PTHR43643">
    <property type="entry name" value="HISTIDINOL-PHOSPHATE AMINOTRANSFERASE 2"/>
    <property type="match status" value="1"/>
</dbReference>
<dbReference type="Pfam" id="PF00155">
    <property type="entry name" value="Aminotran_1_2"/>
    <property type="match status" value="1"/>
</dbReference>
<dbReference type="SUPFAM" id="SSF53383">
    <property type="entry name" value="PLP-dependent transferases"/>
    <property type="match status" value="1"/>
</dbReference>
<evidence type="ECO:0000255" key="1">
    <source>
        <dbReference type="HAMAP-Rule" id="MF_01023"/>
    </source>
</evidence>
<evidence type="ECO:0000305" key="2"/>
<proteinExistence type="inferred from homology"/>